<sequence length="817" mass="91065">MEEKKGEPLFGKVVPLPLVEEIKHSYLDYAMSVIVGRALPDARDGLKPVQRRILYAMMELGLRHNTAYKKSARVVGETMGKYHPHGDSAIYDTMVRMAQDFSMRYPLVDGQGNFGSIDGDPAAAMRYTEARLYEIGELMLADIDQDTVDWGPNFDESLQEPLCLPAMLPNLLINGSSGIAVGMATNIPPHNLVEVVDALCYLIDTEPEQVDIGEILFRMPGPDFPTGGLILGRDGIIDAYRTGRGKITMRGRTHIEEGKRGKTFIVITEIPYMVNKTNLIETIAKNVQDKTIDGVMDLRDESDREGLRIVIEVNRDTDPNLVLRQLYRRTQLQSTFGVINLALIDGYPKELSIEEMLNIFLNHRRSVVRRRTQFRLEKAEARAHIVEGLVKALDIIDEVIALIRGSATTEEAKEGLISKLDFSEAQAQAILEMRLQRLTGLEREKLEAELAQLLSDIERYQTILGNPKVLDSVIKEELLEVKRRFGNERKTEIIDAVEDVSIEDLIPESDIVVVLSRDGYLRRKDLQEYTLQGRGGKGRKGTALQEEDEVALVAVTSTHRDIYLFTSKGRVLALKGYVIPESKTGRGKLINRFVALEEGERVVTMHGRAVDGAKYAFFITLRGTAKRLDLSELENLTRAGRRVMGLDEGDEISQIVLTSGDDHLLIVTAQGQALRTHESEFRPMGRTARGVRGIRLRKNDYVIGCDVVANGRWPLLLSENGFGKRTKYDEFSLRHRGGSGVIVMNLSDRTGLIVGCWSVAEGDEIVAITSRGRMIRLAVSESPVLGRTAMGSIMMRLDEGDTVATASVVSTEDGEDD</sequence>
<evidence type="ECO:0000255" key="1">
    <source>
        <dbReference type="HAMAP-Rule" id="MF_01897"/>
    </source>
</evidence>
<evidence type="ECO:0000255" key="2">
    <source>
        <dbReference type="PROSITE-ProRule" id="PRU01384"/>
    </source>
</evidence>
<gene>
    <name evidence="1" type="primary">gyrA</name>
    <name type="ordered locus">Amico_0252</name>
</gene>
<protein>
    <recommendedName>
        <fullName evidence="1">DNA gyrase subunit A</fullName>
        <ecNumber evidence="1">5.6.2.2</ecNumber>
    </recommendedName>
</protein>
<accession>D5ECW5</accession>
<feature type="chain" id="PRO_0000409820" description="DNA gyrase subunit A">
    <location>
        <begin position="1"/>
        <end position="817"/>
    </location>
</feature>
<feature type="domain" description="Topo IIA-type catalytic" evidence="2">
    <location>
        <begin position="39"/>
        <end position="505"/>
    </location>
</feature>
<feature type="short sequence motif" description="GyrA-box" evidence="1">
    <location>
        <begin position="532"/>
        <end position="538"/>
    </location>
</feature>
<feature type="active site" description="O-(5'-phospho-DNA)-tyrosine intermediate" evidence="1">
    <location>
        <position position="127"/>
    </location>
</feature>
<reference key="1">
    <citation type="journal article" date="2010" name="Stand. Genomic Sci.">
        <title>Complete genome sequence of Aminobacterium colombiense type strain (ALA-1).</title>
        <authorList>
            <person name="Chertkov O."/>
            <person name="Sikorski J."/>
            <person name="Brambilla E."/>
            <person name="Lapidus A."/>
            <person name="Copeland A."/>
            <person name="Glavina Del Rio T."/>
            <person name="Nolan M."/>
            <person name="Lucas S."/>
            <person name="Tice H."/>
            <person name="Cheng J.F."/>
            <person name="Han C."/>
            <person name="Detter J.C."/>
            <person name="Bruce D."/>
            <person name="Tapia R."/>
            <person name="Goodwin L."/>
            <person name="Pitluck S."/>
            <person name="Liolios K."/>
            <person name="Ivanova N."/>
            <person name="Mavromatis K."/>
            <person name="Ovchinnikova G."/>
            <person name="Pati A."/>
            <person name="Chen A."/>
            <person name="Palaniappan K."/>
            <person name="Land M."/>
            <person name="Hauser L."/>
            <person name="Chang Y.J."/>
            <person name="Jeffries C.D."/>
            <person name="Spring S."/>
            <person name="Rohde M."/>
            <person name="Goker M."/>
            <person name="Bristow J."/>
            <person name="Eisen J.A."/>
            <person name="Markowitz V."/>
            <person name="Hugenholtz P."/>
            <person name="Kyrpides N.C."/>
            <person name="Klenk H.P."/>
        </authorList>
    </citation>
    <scope>NUCLEOTIDE SEQUENCE [LARGE SCALE GENOMIC DNA]</scope>
    <source>
        <strain>DSM 12261 / ALA-1</strain>
    </source>
</reference>
<comment type="function">
    <text evidence="1">A type II topoisomerase that negatively supercoils closed circular double-stranded (ds) DNA in an ATP-dependent manner to modulate DNA topology and maintain chromosomes in an underwound state. Negative supercoiling favors strand separation, and DNA replication, transcription, recombination and repair, all of which involve strand separation. Also able to catalyze the interconversion of other topological isomers of dsDNA rings, including catenanes and knotted rings. Type II topoisomerases break and join 2 DNA strands simultaneously in an ATP-dependent manner.</text>
</comment>
<comment type="catalytic activity">
    <reaction evidence="1">
        <text>ATP-dependent breakage, passage and rejoining of double-stranded DNA.</text>
        <dbReference type="EC" id="5.6.2.2"/>
    </reaction>
</comment>
<comment type="subunit">
    <text evidence="1">Heterotetramer, composed of two GyrA and two GyrB chains. In the heterotetramer, GyrA contains the active site tyrosine that forms a transient covalent intermediate with DNA, while GyrB binds cofactors and catalyzes ATP hydrolysis.</text>
</comment>
<comment type="subcellular location">
    <subcellularLocation>
        <location evidence="1">Cytoplasm</location>
    </subcellularLocation>
</comment>
<comment type="miscellaneous">
    <text evidence="1">Few gyrases are as efficient as E.coli at forming negative supercoils. Not all organisms have 2 type II topoisomerases; in organisms with a single type II topoisomerase this enzyme also has to decatenate newly replicated chromosomes.</text>
</comment>
<comment type="similarity">
    <text evidence="1">Belongs to the type II topoisomerase GyrA/ParC subunit family.</text>
</comment>
<dbReference type="EC" id="5.6.2.2" evidence="1"/>
<dbReference type="EMBL" id="CP001997">
    <property type="protein sequence ID" value="ADE56397.1"/>
    <property type="molecule type" value="Genomic_DNA"/>
</dbReference>
<dbReference type="RefSeq" id="WP_013047663.1">
    <property type="nucleotide sequence ID" value="NC_014011.1"/>
</dbReference>
<dbReference type="SMR" id="D5ECW5"/>
<dbReference type="STRING" id="572547.Amico_0252"/>
<dbReference type="KEGG" id="aco:Amico_0252"/>
<dbReference type="eggNOG" id="COG0188">
    <property type="taxonomic scope" value="Bacteria"/>
</dbReference>
<dbReference type="HOGENOM" id="CLU_002977_6_1_0"/>
<dbReference type="OrthoDB" id="9806486at2"/>
<dbReference type="Proteomes" id="UP000002366">
    <property type="component" value="Chromosome"/>
</dbReference>
<dbReference type="GO" id="GO:0005694">
    <property type="term" value="C:chromosome"/>
    <property type="evidence" value="ECO:0007669"/>
    <property type="project" value="InterPro"/>
</dbReference>
<dbReference type="GO" id="GO:0005737">
    <property type="term" value="C:cytoplasm"/>
    <property type="evidence" value="ECO:0007669"/>
    <property type="project" value="UniProtKB-SubCell"/>
</dbReference>
<dbReference type="GO" id="GO:0009330">
    <property type="term" value="C:DNA topoisomerase type II (double strand cut, ATP-hydrolyzing) complex"/>
    <property type="evidence" value="ECO:0007669"/>
    <property type="project" value="TreeGrafter"/>
</dbReference>
<dbReference type="GO" id="GO:0005524">
    <property type="term" value="F:ATP binding"/>
    <property type="evidence" value="ECO:0007669"/>
    <property type="project" value="UniProtKB-UniRule"/>
</dbReference>
<dbReference type="GO" id="GO:0003677">
    <property type="term" value="F:DNA binding"/>
    <property type="evidence" value="ECO:0007669"/>
    <property type="project" value="UniProtKB-UniRule"/>
</dbReference>
<dbReference type="GO" id="GO:0034335">
    <property type="term" value="F:DNA negative supercoiling activity"/>
    <property type="evidence" value="ECO:0007669"/>
    <property type="project" value="UniProtKB-ARBA"/>
</dbReference>
<dbReference type="GO" id="GO:0006265">
    <property type="term" value="P:DNA topological change"/>
    <property type="evidence" value="ECO:0007669"/>
    <property type="project" value="UniProtKB-UniRule"/>
</dbReference>
<dbReference type="GO" id="GO:0006261">
    <property type="term" value="P:DNA-templated DNA replication"/>
    <property type="evidence" value="ECO:0007669"/>
    <property type="project" value="UniProtKB-UniRule"/>
</dbReference>
<dbReference type="CDD" id="cd00187">
    <property type="entry name" value="TOP4c"/>
    <property type="match status" value="1"/>
</dbReference>
<dbReference type="FunFam" id="1.10.268.10:FF:000001">
    <property type="entry name" value="DNA gyrase subunit A"/>
    <property type="match status" value="1"/>
</dbReference>
<dbReference type="FunFam" id="3.30.1360.40:FF:000002">
    <property type="entry name" value="DNA gyrase subunit A"/>
    <property type="match status" value="1"/>
</dbReference>
<dbReference type="FunFam" id="3.90.199.10:FF:000001">
    <property type="entry name" value="DNA gyrase subunit A"/>
    <property type="match status" value="1"/>
</dbReference>
<dbReference type="Gene3D" id="3.30.1360.40">
    <property type="match status" value="1"/>
</dbReference>
<dbReference type="Gene3D" id="2.120.10.90">
    <property type="entry name" value="DNA gyrase/topoisomerase IV, subunit A, C-terminal"/>
    <property type="match status" value="1"/>
</dbReference>
<dbReference type="Gene3D" id="3.90.199.10">
    <property type="entry name" value="Topoisomerase II, domain 5"/>
    <property type="match status" value="1"/>
</dbReference>
<dbReference type="Gene3D" id="1.10.268.10">
    <property type="entry name" value="Topoisomerase, domain 3"/>
    <property type="match status" value="1"/>
</dbReference>
<dbReference type="HAMAP" id="MF_01897">
    <property type="entry name" value="GyrA"/>
    <property type="match status" value="1"/>
</dbReference>
<dbReference type="InterPro" id="IPR005743">
    <property type="entry name" value="GyrA"/>
</dbReference>
<dbReference type="InterPro" id="IPR006691">
    <property type="entry name" value="GyrA/parC_rep"/>
</dbReference>
<dbReference type="InterPro" id="IPR035516">
    <property type="entry name" value="Gyrase/topoIV_suA_C"/>
</dbReference>
<dbReference type="InterPro" id="IPR013760">
    <property type="entry name" value="Topo_IIA-like_dom_sf"/>
</dbReference>
<dbReference type="InterPro" id="IPR013758">
    <property type="entry name" value="Topo_IIA_A/C_ab"/>
</dbReference>
<dbReference type="InterPro" id="IPR013757">
    <property type="entry name" value="Topo_IIA_A_a_sf"/>
</dbReference>
<dbReference type="InterPro" id="IPR002205">
    <property type="entry name" value="Topo_IIA_dom_A"/>
</dbReference>
<dbReference type="InterPro" id="IPR050220">
    <property type="entry name" value="Type_II_DNA_Topoisomerases"/>
</dbReference>
<dbReference type="NCBIfam" id="TIGR01063">
    <property type="entry name" value="gyrA"/>
    <property type="match status" value="1"/>
</dbReference>
<dbReference type="NCBIfam" id="NF004043">
    <property type="entry name" value="PRK05560.1"/>
    <property type="match status" value="1"/>
</dbReference>
<dbReference type="NCBIfam" id="NF004044">
    <property type="entry name" value="PRK05561.1"/>
    <property type="match status" value="1"/>
</dbReference>
<dbReference type="PANTHER" id="PTHR43493:SF5">
    <property type="entry name" value="DNA GYRASE SUBUNIT A, CHLOROPLASTIC_MITOCHONDRIAL"/>
    <property type="match status" value="1"/>
</dbReference>
<dbReference type="PANTHER" id="PTHR43493">
    <property type="entry name" value="DNA GYRASE/TOPOISOMERASE SUBUNIT A"/>
    <property type="match status" value="1"/>
</dbReference>
<dbReference type="Pfam" id="PF03989">
    <property type="entry name" value="DNA_gyraseA_C"/>
    <property type="match status" value="6"/>
</dbReference>
<dbReference type="Pfam" id="PF00521">
    <property type="entry name" value="DNA_topoisoIV"/>
    <property type="match status" value="1"/>
</dbReference>
<dbReference type="SMART" id="SM00434">
    <property type="entry name" value="TOP4c"/>
    <property type="match status" value="1"/>
</dbReference>
<dbReference type="SUPFAM" id="SSF101904">
    <property type="entry name" value="GyrA/ParC C-terminal domain-like"/>
    <property type="match status" value="1"/>
</dbReference>
<dbReference type="SUPFAM" id="SSF56719">
    <property type="entry name" value="Type II DNA topoisomerase"/>
    <property type="match status" value="1"/>
</dbReference>
<dbReference type="PROSITE" id="PS52040">
    <property type="entry name" value="TOPO_IIA"/>
    <property type="match status" value="1"/>
</dbReference>
<name>GYRA_AMICL</name>
<proteinExistence type="inferred from homology"/>
<keyword id="KW-0067">ATP-binding</keyword>
<keyword id="KW-0963">Cytoplasm</keyword>
<keyword id="KW-0238">DNA-binding</keyword>
<keyword id="KW-0413">Isomerase</keyword>
<keyword id="KW-0547">Nucleotide-binding</keyword>
<keyword id="KW-1185">Reference proteome</keyword>
<keyword id="KW-0799">Topoisomerase</keyword>
<organism>
    <name type="scientific">Aminobacterium colombiense (strain DSM 12261 / ALA-1)</name>
    <dbReference type="NCBI Taxonomy" id="572547"/>
    <lineage>
        <taxon>Bacteria</taxon>
        <taxon>Thermotogati</taxon>
        <taxon>Synergistota</taxon>
        <taxon>Synergistia</taxon>
        <taxon>Synergistales</taxon>
        <taxon>Aminobacteriaceae</taxon>
        <taxon>Aminobacterium</taxon>
    </lineage>
</organism>